<evidence type="ECO:0000250" key="1"/>
<evidence type="ECO:0000255" key="2">
    <source>
        <dbReference type="HAMAP-Rule" id="MF_00118"/>
    </source>
</evidence>
<reference key="1">
    <citation type="journal article" date="2008" name="J. Bacteriol.">
        <title>Genome sequence of Lactobacillus helveticus: an organism distinguished by selective gene loss and IS element expansion.</title>
        <authorList>
            <person name="Callanan M."/>
            <person name="Kaleta P."/>
            <person name="O'Callaghan J."/>
            <person name="O'Sullivan O."/>
            <person name="Jordan K."/>
            <person name="McAuliffe O."/>
            <person name="Sangrador-Vegas A."/>
            <person name="Slattery L."/>
            <person name="Fitzgerald G.F."/>
            <person name="Beresford T."/>
            <person name="Ross R.P."/>
        </authorList>
    </citation>
    <scope>NUCLEOTIDE SEQUENCE [LARGE SCALE GENOMIC DNA]</scope>
    <source>
        <strain>DPC 4571</strain>
    </source>
</reference>
<dbReference type="EC" id="3.6.5.3" evidence="2"/>
<dbReference type="EMBL" id="CP000517">
    <property type="protein sequence ID" value="ABX27010.1"/>
    <property type="molecule type" value="Genomic_DNA"/>
</dbReference>
<dbReference type="RefSeq" id="WP_012211723.1">
    <property type="nucleotide sequence ID" value="NC_010080.1"/>
</dbReference>
<dbReference type="SMR" id="A8YUS2"/>
<dbReference type="KEGG" id="lhe:lhv_0895"/>
<dbReference type="eggNOG" id="COG0050">
    <property type="taxonomic scope" value="Bacteria"/>
</dbReference>
<dbReference type="HOGENOM" id="CLU_007265_0_0_9"/>
<dbReference type="Proteomes" id="UP000000790">
    <property type="component" value="Chromosome"/>
</dbReference>
<dbReference type="GO" id="GO:0005829">
    <property type="term" value="C:cytosol"/>
    <property type="evidence" value="ECO:0007669"/>
    <property type="project" value="TreeGrafter"/>
</dbReference>
<dbReference type="GO" id="GO:0005525">
    <property type="term" value="F:GTP binding"/>
    <property type="evidence" value="ECO:0007669"/>
    <property type="project" value="UniProtKB-UniRule"/>
</dbReference>
<dbReference type="GO" id="GO:0003924">
    <property type="term" value="F:GTPase activity"/>
    <property type="evidence" value="ECO:0007669"/>
    <property type="project" value="InterPro"/>
</dbReference>
<dbReference type="GO" id="GO:0003746">
    <property type="term" value="F:translation elongation factor activity"/>
    <property type="evidence" value="ECO:0007669"/>
    <property type="project" value="UniProtKB-UniRule"/>
</dbReference>
<dbReference type="CDD" id="cd01884">
    <property type="entry name" value="EF_Tu"/>
    <property type="match status" value="1"/>
</dbReference>
<dbReference type="CDD" id="cd03697">
    <property type="entry name" value="EFTU_II"/>
    <property type="match status" value="1"/>
</dbReference>
<dbReference type="CDD" id="cd03707">
    <property type="entry name" value="EFTU_III"/>
    <property type="match status" value="1"/>
</dbReference>
<dbReference type="FunFam" id="2.40.30.10:FF:000001">
    <property type="entry name" value="Elongation factor Tu"/>
    <property type="match status" value="1"/>
</dbReference>
<dbReference type="FunFam" id="3.40.50.300:FF:000003">
    <property type="entry name" value="Elongation factor Tu"/>
    <property type="match status" value="1"/>
</dbReference>
<dbReference type="Gene3D" id="3.40.50.300">
    <property type="entry name" value="P-loop containing nucleotide triphosphate hydrolases"/>
    <property type="match status" value="1"/>
</dbReference>
<dbReference type="Gene3D" id="2.40.30.10">
    <property type="entry name" value="Translation factors"/>
    <property type="match status" value="2"/>
</dbReference>
<dbReference type="HAMAP" id="MF_00118_B">
    <property type="entry name" value="EF_Tu_B"/>
    <property type="match status" value="1"/>
</dbReference>
<dbReference type="InterPro" id="IPR041709">
    <property type="entry name" value="EF-Tu_GTP-bd"/>
</dbReference>
<dbReference type="InterPro" id="IPR050055">
    <property type="entry name" value="EF-Tu_GTPase"/>
</dbReference>
<dbReference type="InterPro" id="IPR004161">
    <property type="entry name" value="EFTu-like_2"/>
</dbReference>
<dbReference type="InterPro" id="IPR033720">
    <property type="entry name" value="EFTU_2"/>
</dbReference>
<dbReference type="InterPro" id="IPR031157">
    <property type="entry name" value="G_TR_CS"/>
</dbReference>
<dbReference type="InterPro" id="IPR027417">
    <property type="entry name" value="P-loop_NTPase"/>
</dbReference>
<dbReference type="InterPro" id="IPR005225">
    <property type="entry name" value="Small_GTP-bd"/>
</dbReference>
<dbReference type="InterPro" id="IPR000795">
    <property type="entry name" value="T_Tr_GTP-bd_dom"/>
</dbReference>
<dbReference type="InterPro" id="IPR009000">
    <property type="entry name" value="Transl_B-barrel_sf"/>
</dbReference>
<dbReference type="InterPro" id="IPR009001">
    <property type="entry name" value="Transl_elong_EF1A/Init_IF2_C"/>
</dbReference>
<dbReference type="InterPro" id="IPR004541">
    <property type="entry name" value="Transl_elong_EFTu/EF1A_bac/org"/>
</dbReference>
<dbReference type="InterPro" id="IPR004160">
    <property type="entry name" value="Transl_elong_EFTu/EF1A_C"/>
</dbReference>
<dbReference type="NCBIfam" id="TIGR00485">
    <property type="entry name" value="EF-Tu"/>
    <property type="match status" value="1"/>
</dbReference>
<dbReference type="NCBIfam" id="NF000766">
    <property type="entry name" value="PRK00049.1"/>
    <property type="match status" value="1"/>
</dbReference>
<dbReference type="NCBIfam" id="NF009372">
    <property type="entry name" value="PRK12735.1"/>
    <property type="match status" value="1"/>
</dbReference>
<dbReference type="NCBIfam" id="NF009373">
    <property type="entry name" value="PRK12736.1"/>
    <property type="match status" value="1"/>
</dbReference>
<dbReference type="NCBIfam" id="TIGR00231">
    <property type="entry name" value="small_GTP"/>
    <property type="match status" value="1"/>
</dbReference>
<dbReference type="PANTHER" id="PTHR43721:SF22">
    <property type="entry name" value="ELONGATION FACTOR TU, MITOCHONDRIAL"/>
    <property type="match status" value="1"/>
</dbReference>
<dbReference type="PANTHER" id="PTHR43721">
    <property type="entry name" value="ELONGATION FACTOR TU-RELATED"/>
    <property type="match status" value="1"/>
</dbReference>
<dbReference type="Pfam" id="PF00009">
    <property type="entry name" value="GTP_EFTU"/>
    <property type="match status" value="1"/>
</dbReference>
<dbReference type="Pfam" id="PF03144">
    <property type="entry name" value="GTP_EFTU_D2"/>
    <property type="match status" value="1"/>
</dbReference>
<dbReference type="Pfam" id="PF03143">
    <property type="entry name" value="GTP_EFTU_D3"/>
    <property type="match status" value="1"/>
</dbReference>
<dbReference type="PRINTS" id="PR00315">
    <property type="entry name" value="ELONGATNFCT"/>
</dbReference>
<dbReference type="SUPFAM" id="SSF50465">
    <property type="entry name" value="EF-Tu/eEF-1alpha/eIF2-gamma C-terminal domain"/>
    <property type="match status" value="1"/>
</dbReference>
<dbReference type="SUPFAM" id="SSF52540">
    <property type="entry name" value="P-loop containing nucleoside triphosphate hydrolases"/>
    <property type="match status" value="1"/>
</dbReference>
<dbReference type="SUPFAM" id="SSF50447">
    <property type="entry name" value="Translation proteins"/>
    <property type="match status" value="1"/>
</dbReference>
<dbReference type="PROSITE" id="PS00301">
    <property type="entry name" value="G_TR_1"/>
    <property type="match status" value="1"/>
</dbReference>
<dbReference type="PROSITE" id="PS51722">
    <property type="entry name" value="G_TR_2"/>
    <property type="match status" value="1"/>
</dbReference>
<name>EFTU_LACH4</name>
<feature type="chain" id="PRO_0000337417" description="Elongation factor Tu">
    <location>
        <begin position="1"/>
        <end position="396"/>
    </location>
</feature>
<feature type="domain" description="tr-type G">
    <location>
        <begin position="11"/>
        <end position="205"/>
    </location>
</feature>
<feature type="region of interest" description="G1" evidence="1">
    <location>
        <begin position="20"/>
        <end position="27"/>
    </location>
</feature>
<feature type="region of interest" description="G2" evidence="1">
    <location>
        <begin position="61"/>
        <end position="65"/>
    </location>
</feature>
<feature type="region of interest" description="G3" evidence="1">
    <location>
        <begin position="82"/>
        <end position="85"/>
    </location>
</feature>
<feature type="region of interest" description="G4" evidence="1">
    <location>
        <begin position="137"/>
        <end position="140"/>
    </location>
</feature>
<feature type="region of interest" description="G5" evidence="1">
    <location>
        <begin position="175"/>
        <end position="177"/>
    </location>
</feature>
<feature type="binding site" evidence="2">
    <location>
        <begin position="20"/>
        <end position="27"/>
    </location>
    <ligand>
        <name>GTP</name>
        <dbReference type="ChEBI" id="CHEBI:37565"/>
    </ligand>
</feature>
<feature type="binding site" evidence="2">
    <location>
        <position position="27"/>
    </location>
    <ligand>
        <name>Mg(2+)</name>
        <dbReference type="ChEBI" id="CHEBI:18420"/>
    </ligand>
</feature>
<feature type="binding site" evidence="2">
    <location>
        <begin position="82"/>
        <end position="86"/>
    </location>
    <ligand>
        <name>GTP</name>
        <dbReference type="ChEBI" id="CHEBI:37565"/>
    </ligand>
</feature>
<feature type="binding site" evidence="2">
    <location>
        <begin position="137"/>
        <end position="140"/>
    </location>
    <ligand>
        <name>GTP</name>
        <dbReference type="ChEBI" id="CHEBI:37565"/>
    </ligand>
</feature>
<comment type="function">
    <text evidence="2">GTP hydrolase that promotes the GTP-dependent binding of aminoacyl-tRNA to the A-site of ribosomes during protein biosynthesis.</text>
</comment>
<comment type="catalytic activity">
    <reaction evidence="2">
        <text>GTP + H2O = GDP + phosphate + H(+)</text>
        <dbReference type="Rhea" id="RHEA:19669"/>
        <dbReference type="ChEBI" id="CHEBI:15377"/>
        <dbReference type="ChEBI" id="CHEBI:15378"/>
        <dbReference type="ChEBI" id="CHEBI:37565"/>
        <dbReference type="ChEBI" id="CHEBI:43474"/>
        <dbReference type="ChEBI" id="CHEBI:58189"/>
        <dbReference type="EC" id="3.6.5.3"/>
    </reaction>
    <physiologicalReaction direction="left-to-right" evidence="2">
        <dbReference type="Rhea" id="RHEA:19670"/>
    </physiologicalReaction>
</comment>
<comment type="subunit">
    <text evidence="2">Monomer.</text>
</comment>
<comment type="subcellular location">
    <subcellularLocation>
        <location evidence="2">Cytoplasm</location>
    </subcellularLocation>
</comment>
<comment type="similarity">
    <text evidence="2">Belongs to the TRAFAC class translation factor GTPase superfamily. Classic translation factor GTPase family. EF-Tu/EF-1A subfamily.</text>
</comment>
<keyword id="KW-0963">Cytoplasm</keyword>
<keyword id="KW-0251">Elongation factor</keyword>
<keyword id="KW-0342">GTP-binding</keyword>
<keyword id="KW-0378">Hydrolase</keyword>
<keyword id="KW-0460">Magnesium</keyword>
<keyword id="KW-0479">Metal-binding</keyword>
<keyword id="KW-0547">Nucleotide-binding</keyword>
<keyword id="KW-0648">Protein biosynthesis</keyword>
<sequence>MAEKEHYVRTKPHVNIGTIGHVDHGKTTLTAAITTVLAEKGLAKAEDYSQIDAAPEEKERGITINTAHVEYETEKRHYAHMDAPGHADYIKNMITGAAQMDGAILVVAATDGPMPQTREHILLARQVGVNYIVVFLNKCDLVDDPELIDLVEMEVRDLLTEYDYPGDDIPVVRGSALKALEGDKEAQEQILKLMDTVDEYIPTPERQTDKPFLMPVEDVFTITGRGTVASGRIDRGTVKVGDEVEIVGLVDKVLKSVVTGLEMFHKTLDSGEAGDNVGVLLRGIDRDQVVRGQVLAAPGSIQTHNKFKAQVYVLKKEEGGRHTPFFSDYRPQFYFHTTDITGEIELPEGTEMVMPGDNTEFTVTLIKPAAIEKGTKFTIREGGRTVGAGQVTEILD</sequence>
<protein>
    <recommendedName>
        <fullName evidence="2">Elongation factor Tu</fullName>
        <shortName evidence="2">EF-Tu</shortName>
        <ecNumber evidence="2">3.6.5.3</ecNumber>
    </recommendedName>
</protein>
<accession>A8YUS2</accession>
<gene>
    <name evidence="2" type="primary">tuf</name>
    <name type="ordered locus">lhv_0895</name>
</gene>
<organism>
    <name type="scientific">Lactobacillus helveticus (strain DPC 4571)</name>
    <dbReference type="NCBI Taxonomy" id="405566"/>
    <lineage>
        <taxon>Bacteria</taxon>
        <taxon>Bacillati</taxon>
        <taxon>Bacillota</taxon>
        <taxon>Bacilli</taxon>
        <taxon>Lactobacillales</taxon>
        <taxon>Lactobacillaceae</taxon>
        <taxon>Lactobacillus</taxon>
    </lineage>
</organism>
<proteinExistence type="inferred from homology"/>